<accession>P0DOL0</accession>
<accession>P33837</accession>
<feature type="chain" id="PRO_0000448226" description="25 kDa core protein OPG138" evidence="1">
    <location>
        <begin position="1"/>
        <end position="189"/>
    </location>
</feature>
<feature type="chain" id="PRO_0000448228" description="17 kDa core protein OPG138" evidence="1">
    <location>
        <begin position="1"/>
        <end position="56"/>
    </location>
</feature>
<feature type="region of interest" description="Disordered" evidence="2">
    <location>
        <begin position="69"/>
        <end position="102"/>
    </location>
</feature>
<feature type="region of interest" description="Disordered" evidence="2">
    <location>
        <begin position="151"/>
        <end position="173"/>
    </location>
</feature>
<feature type="compositionally biased region" description="Low complexity" evidence="2">
    <location>
        <begin position="69"/>
        <end position="89"/>
    </location>
</feature>
<feature type="compositionally biased region" description="Basic residues" evidence="2">
    <location>
        <begin position="151"/>
        <end position="161"/>
    </location>
</feature>
<feature type="site" description="Cleavage; by OPG083 protease" evidence="1">
    <location>
        <begin position="56"/>
        <end position="57"/>
    </location>
</feature>
<dbReference type="EMBL" id="L22579">
    <property type="protein sequence ID" value="AAA60864.1"/>
    <property type="molecule type" value="Genomic_DNA"/>
</dbReference>
<dbReference type="PIR" id="T28554">
    <property type="entry name" value="T28554"/>
</dbReference>
<dbReference type="RefSeq" id="NP_042160.1">
    <property type="nucleotide sequence ID" value="NC_001611.1"/>
</dbReference>
<dbReference type="SMR" id="P0DOL0"/>
<dbReference type="GeneID" id="1486487"/>
<dbReference type="KEGG" id="vg:1486487"/>
<dbReference type="Proteomes" id="UP000119805">
    <property type="component" value="Segment"/>
</dbReference>
<dbReference type="GO" id="GO:0044423">
    <property type="term" value="C:virion component"/>
    <property type="evidence" value="ECO:0007669"/>
    <property type="project" value="UniProtKB-KW"/>
</dbReference>
<dbReference type="InterPro" id="IPR006744">
    <property type="entry name" value="Poxvirus_A12"/>
</dbReference>
<dbReference type="Pfam" id="PF04651">
    <property type="entry name" value="Pox_A12"/>
    <property type="match status" value="1"/>
</dbReference>
<keyword id="KW-0426">Late protein</keyword>
<keyword id="KW-0946">Virion</keyword>
<proteinExistence type="evidence at transcript level"/>
<evidence type="ECO:0000250" key="1">
    <source>
        <dbReference type="UniProtKB" id="Q80HV7"/>
    </source>
</evidence>
<evidence type="ECO:0000256" key="2">
    <source>
        <dbReference type="SAM" id="MobiDB-lite"/>
    </source>
</evidence>
<evidence type="ECO:0000305" key="3"/>
<name>PG138_VARV</name>
<sequence length="189" mass="20192">MADKKNLAVRSSYDDYIETVNKITPQLKNLLAQIGGDAAVKGGNNNLNSQTDVTAGACDTKSKSSKCITCKSKSSSSSTSTSKSSKNTSGAPRRRTTATTSFNAMDGQIVQAVTNAGKIVYGTVRDGQLEVRGMVGEINHDLLGIESVNAGKKKPSKKMPTNKKINMSSGMRRQEQINPNDCCLDMGMY</sequence>
<reference key="1">
    <citation type="journal article" date="1993" name="Nature">
        <title>Potential virulence determinants in terminal regions of variola smallpox virus genome.</title>
        <authorList>
            <person name="Massung R.F."/>
            <person name="Esposito J.J."/>
            <person name="Liu L.I."/>
            <person name="Qi J."/>
            <person name="Utterback T.R."/>
            <person name="Knight J.C."/>
            <person name="Aubin L."/>
            <person name="Yuran T.E."/>
            <person name="Parsons J.M."/>
            <person name="Loparev V.N."/>
            <person name="Selivanov N.A."/>
            <person name="Cavallaro K.F."/>
            <person name="Kerlavage A.R."/>
            <person name="Mahy B.W.J."/>
            <person name="Venter J.C."/>
        </authorList>
    </citation>
    <scope>NUCLEOTIDE SEQUENCE [GENOMIC DNA]</scope>
    <source>
        <strain>Bangladesh-1975</strain>
    </source>
</reference>
<gene>
    <name type="primary">OPG138</name>
    <name type="ORF">A12L</name>
</gene>
<comment type="function">
    <text evidence="1">Component of the virion core that undergoes proteolytic processing during the immature virion (IV) to mature virion (MV) transition. Essential for the formation of a structurally normal core.</text>
</comment>
<comment type="subcellular location">
    <molecule>25 kDa core protein OPG138</molecule>
    <subcellularLocation>
        <location evidence="1">Virion</location>
    </subcellularLocation>
    <text evidence="1">Localizes to the virion core.</text>
</comment>
<comment type="subcellular location">
    <molecule>17 kDa core protein OPG138</molecule>
    <subcellularLocation>
        <location evidence="1">Virion</location>
    </subcellularLocation>
    <text evidence="1">Localizes to the virion core.</text>
</comment>
<comment type="induction">
    <text>Expressed in the late phase of the viral replicative cycle.</text>
</comment>
<comment type="PTM">
    <text evidence="1">The 25-kDa precursor is cleaved to a mature protein of 17 kDa during virion maturation. Further proteolytic processing is supposed to occur since five more OPG138-derived products have been observed.</text>
</comment>
<comment type="similarity">
    <text evidence="3">Belongs to the orthopoxvirus OPG138 family.</text>
</comment>
<organismHost>
    <name type="scientific">Homo sapiens</name>
    <name type="common">Human</name>
    <dbReference type="NCBI Taxonomy" id="9606"/>
</organismHost>
<protein>
    <recommendedName>
        <fullName>25 kDa core protein OPG138</fullName>
    </recommendedName>
    <component>
        <recommendedName>
            <fullName>17 kDa core protein OPG138</fullName>
            <shortName>17K</shortName>
        </recommendedName>
    </component>
</protein>
<organism>
    <name type="scientific">Variola virus</name>
    <dbReference type="NCBI Taxonomy" id="10255"/>
    <lineage>
        <taxon>Viruses</taxon>
        <taxon>Varidnaviria</taxon>
        <taxon>Bamfordvirae</taxon>
        <taxon>Nucleocytoviricota</taxon>
        <taxon>Pokkesviricetes</taxon>
        <taxon>Chitovirales</taxon>
        <taxon>Poxviridae</taxon>
        <taxon>Chordopoxvirinae</taxon>
        <taxon>Orthopoxvirus</taxon>
    </lineage>
</organism>